<sequence length="95" mass="10380">MALTLEQVRHVATLARLSLTPEEEQRFTTQLSAVLDAVEQLQSLDVEAVEPTSHATLTSSRLREDVTRPSLPPEKSLANAPAKSDTSFAVPKIIE</sequence>
<organism>
    <name type="scientific">Myxococcus xanthus (strain DK1622)</name>
    <dbReference type="NCBI Taxonomy" id="246197"/>
    <lineage>
        <taxon>Bacteria</taxon>
        <taxon>Pseudomonadati</taxon>
        <taxon>Myxococcota</taxon>
        <taxon>Myxococcia</taxon>
        <taxon>Myxococcales</taxon>
        <taxon>Cystobacterineae</taxon>
        <taxon>Myxococcaceae</taxon>
        <taxon>Myxococcus</taxon>
    </lineage>
</organism>
<feature type="chain" id="PRO_1000071388" description="Aspartyl/glutamyl-tRNA(Asn/Gln) amidotransferase subunit C">
    <location>
        <begin position="1"/>
        <end position="95"/>
    </location>
</feature>
<feature type="region of interest" description="Disordered" evidence="2">
    <location>
        <begin position="51"/>
        <end position="95"/>
    </location>
</feature>
<comment type="function">
    <text evidence="1">Allows the formation of correctly charged Asn-tRNA(Asn) or Gln-tRNA(Gln) through the transamidation of misacylated Asp-tRNA(Asn) or Glu-tRNA(Gln) in organisms which lack either or both of asparaginyl-tRNA or glutaminyl-tRNA synthetases. The reaction takes place in the presence of glutamine and ATP through an activated phospho-Asp-tRNA(Asn) or phospho-Glu-tRNA(Gln).</text>
</comment>
<comment type="catalytic activity">
    <reaction evidence="1">
        <text>L-glutamyl-tRNA(Gln) + L-glutamine + ATP + H2O = L-glutaminyl-tRNA(Gln) + L-glutamate + ADP + phosphate + H(+)</text>
        <dbReference type="Rhea" id="RHEA:17521"/>
        <dbReference type="Rhea" id="RHEA-COMP:9681"/>
        <dbReference type="Rhea" id="RHEA-COMP:9684"/>
        <dbReference type="ChEBI" id="CHEBI:15377"/>
        <dbReference type="ChEBI" id="CHEBI:15378"/>
        <dbReference type="ChEBI" id="CHEBI:29985"/>
        <dbReference type="ChEBI" id="CHEBI:30616"/>
        <dbReference type="ChEBI" id="CHEBI:43474"/>
        <dbReference type="ChEBI" id="CHEBI:58359"/>
        <dbReference type="ChEBI" id="CHEBI:78520"/>
        <dbReference type="ChEBI" id="CHEBI:78521"/>
        <dbReference type="ChEBI" id="CHEBI:456216"/>
    </reaction>
</comment>
<comment type="catalytic activity">
    <reaction evidence="1">
        <text>L-aspartyl-tRNA(Asn) + L-glutamine + ATP + H2O = L-asparaginyl-tRNA(Asn) + L-glutamate + ADP + phosphate + 2 H(+)</text>
        <dbReference type="Rhea" id="RHEA:14513"/>
        <dbReference type="Rhea" id="RHEA-COMP:9674"/>
        <dbReference type="Rhea" id="RHEA-COMP:9677"/>
        <dbReference type="ChEBI" id="CHEBI:15377"/>
        <dbReference type="ChEBI" id="CHEBI:15378"/>
        <dbReference type="ChEBI" id="CHEBI:29985"/>
        <dbReference type="ChEBI" id="CHEBI:30616"/>
        <dbReference type="ChEBI" id="CHEBI:43474"/>
        <dbReference type="ChEBI" id="CHEBI:58359"/>
        <dbReference type="ChEBI" id="CHEBI:78515"/>
        <dbReference type="ChEBI" id="CHEBI:78516"/>
        <dbReference type="ChEBI" id="CHEBI:456216"/>
    </reaction>
</comment>
<comment type="subunit">
    <text evidence="1">Heterotrimer of A, B and C subunits.</text>
</comment>
<comment type="similarity">
    <text evidence="1">Belongs to the GatC family.</text>
</comment>
<proteinExistence type="inferred from homology"/>
<evidence type="ECO:0000255" key="1">
    <source>
        <dbReference type="HAMAP-Rule" id="MF_00122"/>
    </source>
</evidence>
<evidence type="ECO:0000256" key="2">
    <source>
        <dbReference type="SAM" id="MobiDB-lite"/>
    </source>
</evidence>
<protein>
    <recommendedName>
        <fullName evidence="1">Aspartyl/glutamyl-tRNA(Asn/Gln) amidotransferase subunit C</fullName>
        <shortName evidence="1">Asp/Glu-ADT subunit C</shortName>
        <ecNumber evidence="1">6.3.5.-</ecNumber>
    </recommendedName>
</protein>
<gene>
    <name evidence="1" type="primary">gatC</name>
    <name type="ordered locus">MXAN_1462</name>
</gene>
<reference key="1">
    <citation type="journal article" date="2006" name="Proc. Natl. Acad. Sci. U.S.A.">
        <title>Evolution of sensory complexity recorded in a myxobacterial genome.</title>
        <authorList>
            <person name="Goldman B.S."/>
            <person name="Nierman W.C."/>
            <person name="Kaiser D."/>
            <person name="Slater S.C."/>
            <person name="Durkin A.S."/>
            <person name="Eisen J.A."/>
            <person name="Ronning C.M."/>
            <person name="Barbazuk W.B."/>
            <person name="Blanchard M."/>
            <person name="Field C."/>
            <person name="Halling C."/>
            <person name="Hinkle G."/>
            <person name="Iartchuk O."/>
            <person name="Kim H.S."/>
            <person name="Mackenzie C."/>
            <person name="Madupu R."/>
            <person name="Miller N."/>
            <person name="Shvartsbeyn A."/>
            <person name="Sullivan S.A."/>
            <person name="Vaudin M."/>
            <person name="Wiegand R."/>
            <person name="Kaplan H.B."/>
        </authorList>
    </citation>
    <scope>NUCLEOTIDE SEQUENCE [LARGE SCALE GENOMIC DNA]</scope>
    <source>
        <strain>DK1622</strain>
    </source>
</reference>
<accession>Q1DCA4</accession>
<name>GATC_MYXXD</name>
<keyword id="KW-0067">ATP-binding</keyword>
<keyword id="KW-0436">Ligase</keyword>
<keyword id="KW-0547">Nucleotide-binding</keyword>
<keyword id="KW-0648">Protein biosynthesis</keyword>
<keyword id="KW-1185">Reference proteome</keyword>
<dbReference type="EC" id="6.3.5.-" evidence="1"/>
<dbReference type="EMBL" id="CP000113">
    <property type="protein sequence ID" value="ABF86218.1"/>
    <property type="molecule type" value="Genomic_DNA"/>
</dbReference>
<dbReference type="RefSeq" id="WP_011551578.1">
    <property type="nucleotide sequence ID" value="NC_008095.1"/>
</dbReference>
<dbReference type="SMR" id="Q1DCA4"/>
<dbReference type="STRING" id="246197.MXAN_1462"/>
<dbReference type="EnsemblBacteria" id="ABF86218">
    <property type="protein sequence ID" value="ABF86218"/>
    <property type="gene ID" value="MXAN_1462"/>
</dbReference>
<dbReference type="GeneID" id="41358908"/>
<dbReference type="KEGG" id="mxa:MXAN_1462"/>
<dbReference type="eggNOG" id="COG0721">
    <property type="taxonomic scope" value="Bacteria"/>
</dbReference>
<dbReference type="HOGENOM" id="CLU_105899_1_0_7"/>
<dbReference type="OrthoDB" id="9813938at2"/>
<dbReference type="Proteomes" id="UP000002402">
    <property type="component" value="Chromosome"/>
</dbReference>
<dbReference type="GO" id="GO:0050566">
    <property type="term" value="F:asparaginyl-tRNA synthase (glutamine-hydrolyzing) activity"/>
    <property type="evidence" value="ECO:0007669"/>
    <property type="project" value="RHEA"/>
</dbReference>
<dbReference type="GO" id="GO:0005524">
    <property type="term" value="F:ATP binding"/>
    <property type="evidence" value="ECO:0007669"/>
    <property type="project" value="UniProtKB-KW"/>
</dbReference>
<dbReference type="GO" id="GO:0050567">
    <property type="term" value="F:glutaminyl-tRNA synthase (glutamine-hydrolyzing) activity"/>
    <property type="evidence" value="ECO:0007669"/>
    <property type="project" value="UniProtKB-UniRule"/>
</dbReference>
<dbReference type="GO" id="GO:0070681">
    <property type="term" value="P:glutaminyl-tRNAGln biosynthesis via transamidation"/>
    <property type="evidence" value="ECO:0007669"/>
    <property type="project" value="TreeGrafter"/>
</dbReference>
<dbReference type="GO" id="GO:0006450">
    <property type="term" value="P:regulation of translational fidelity"/>
    <property type="evidence" value="ECO:0007669"/>
    <property type="project" value="InterPro"/>
</dbReference>
<dbReference type="GO" id="GO:0006412">
    <property type="term" value="P:translation"/>
    <property type="evidence" value="ECO:0007669"/>
    <property type="project" value="UniProtKB-UniRule"/>
</dbReference>
<dbReference type="Gene3D" id="1.10.20.60">
    <property type="entry name" value="Glu-tRNAGln amidotransferase C subunit, N-terminal domain"/>
    <property type="match status" value="1"/>
</dbReference>
<dbReference type="HAMAP" id="MF_00122">
    <property type="entry name" value="GatC"/>
    <property type="match status" value="1"/>
</dbReference>
<dbReference type="InterPro" id="IPR036113">
    <property type="entry name" value="Asp/Glu-ADT_sf_sub_c"/>
</dbReference>
<dbReference type="InterPro" id="IPR003837">
    <property type="entry name" value="GatC"/>
</dbReference>
<dbReference type="NCBIfam" id="TIGR00135">
    <property type="entry name" value="gatC"/>
    <property type="match status" value="1"/>
</dbReference>
<dbReference type="PANTHER" id="PTHR15004">
    <property type="entry name" value="GLUTAMYL-TRNA(GLN) AMIDOTRANSFERASE SUBUNIT C, MITOCHONDRIAL"/>
    <property type="match status" value="1"/>
</dbReference>
<dbReference type="PANTHER" id="PTHR15004:SF0">
    <property type="entry name" value="GLUTAMYL-TRNA(GLN) AMIDOTRANSFERASE SUBUNIT C, MITOCHONDRIAL"/>
    <property type="match status" value="1"/>
</dbReference>
<dbReference type="Pfam" id="PF02686">
    <property type="entry name" value="GatC"/>
    <property type="match status" value="1"/>
</dbReference>
<dbReference type="SUPFAM" id="SSF141000">
    <property type="entry name" value="Glu-tRNAGln amidotransferase C subunit"/>
    <property type="match status" value="1"/>
</dbReference>